<keyword id="KW-0560">Oxidoreductase</keyword>
<keyword id="KW-0819">tRNA processing</keyword>
<dbReference type="EC" id="1.14.-.-" evidence="1"/>
<dbReference type="EMBL" id="CP000552">
    <property type="protein sequence ID" value="ABM72392.1"/>
    <property type="molecule type" value="Genomic_DNA"/>
</dbReference>
<dbReference type="RefSeq" id="WP_011820492.1">
    <property type="nucleotide sequence ID" value="NC_008817.1"/>
</dbReference>
<dbReference type="SMR" id="A2BX81"/>
<dbReference type="STRING" id="167542.P9515_11851"/>
<dbReference type="GeneID" id="60201788"/>
<dbReference type="KEGG" id="pmc:P9515_11851"/>
<dbReference type="eggNOG" id="COG1054">
    <property type="taxonomic scope" value="Bacteria"/>
</dbReference>
<dbReference type="HOGENOM" id="CLU_038878_0_0_3"/>
<dbReference type="OrthoDB" id="9778326at2"/>
<dbReference type="Proteomes" id="UP000001589">
    <property type="component" value="Chromosome"/>
</dbReference>
<dbReference type="GO" id="GO:0016705">
    <property type="term" value="F:oxidoreductase activity, acting on paired donors, with incorporation or reduction of molecular oxygen"/>
    <property type="evidence" value="ECO:0007669"/>
    <property type="project" value="UniProtKB-UniRule"/>
</dbReference>
<dbReference type="GO" id="GO:0006400">
    <property type="term" value="P:tRNA modification"/>
    <property type="evidence" value="ECO:0007669"/>
    <property type="project" value="UniProtKB-UniRule"/>
</dbReference>
<dbReference type="CDD" id="cd01518">
    <property type="entry name" value="RHOD_YceA"/>
    <property type="match status" value="1"/>
</dbReference>
<dbReference type="Gene3D" id="3.30.70.100">
    <property type="match status" value="1"/>
</dbReference>
<dbReference type="Gene3D" id="3.40.250.10">
    <property type="entry name" value="Rhodanese-like domain"/>
    <property type="match status" value="1"/>
</dbReference>
<dbReference type="HAMAP" id="MF_00469">
    <property type="entry name" value="TrhO"/>
    <property type="match status" value="1"/>
</dbReference>
<dbReference type="InterPro" id="IPR001763">
    <property type="entry name" value="Rhodanese-like_dom"/>
</dbReference>
<dbReference type="InterPro" id="IPR036873">
    <property type="entry name" value="Rhodanese-like_dom_sf"/>
</dbReference>
<dbReference type="InterPro" id="IPR020936">
    <property type="entry name" value="TrhO"/>
</dbReference>
<dbReference type="InterPro" id="IPR040503">
    <property type="entry name" value="TRHO_N"/>
</dbReference>
<dbReference type="NCBIfam" id="NF001136">
    <property type="entry name" value="PRK00142.1-4"/>
    <property type="match status" value="1"/>
</dbReference>
<dbReference type="PANTHER" id="PTHR43268:SF3">
    <property type="entry name" value="RHODANESE-LIKE DOMAIN-CONTAINING PROTEIN 7-RELATED"/>
    <property type="match status" value="1"/>
</dbReference>
<dbReference type="PANTHER" id="PTHR43268">
    <property type="entry name" value="THIOSULFATE SULFURTRANSFERASE/RHODANESE-LIKE DOMAIN-CONTAINING PROTEIN 2"/>
    <property type="match status" value="1"/>
</dbReference>
<dbReference type="Pfam" id="PF00581">
    <property type="entry name" value="Rhodanese"/>
    <property type="match status" value="1"/>
</dbReference>
<dbReference type="Pfam" id="PF17773">
    <property type="entry name" value="UPF0176_N"/>
    <property type="match status" value="1"/>
</dbReference>
<dbReference type="SMART" id="SM00450">
    <property type="entry name" value="RHOD"/>
    <property type="match status" value="1"/>
</dbReference>
<dbReference type="SUPFAM" id="SSF52821">
    <property type="entry name" value="Rhodanese/Cell cycle control phosphatase"/>
    <property type="match status" value="1"/>
</dbReference>
<dbReference type="PROSITE" id="PS50206">
    <property type="entry name" value="RHODANESE_3"/>
    <property type="match status" value="1"/>
</dbReference>
<protein>
    <recommendedName>
        <fullName evidence="1">tRNA uridine(34) hydroxylase</fullName>
        <ecNumber evidence="1">1.14.-.-</ecNumber>
    </recommendedName>
    <alternativeName>
        <fullName evidence="1">tRNA hydroxylation protein O</fullName>
    </alternativeName>
</protein>
<name>TRHO_PROM5</name>
<comment type="function">
    <text evidence="1">Catalyzes oxygen-dependent 5-hydroxyuridine (ho5U) modification at position 34 in tRNAs.</text>
</comment>
<comment type="catalytic activity">
    <reaction evidence="1">
        <text>uridine(34) in tRNA + AH2 + O2 = 5-hydroxyuridine(34) in tRNA + A + H2O</text>
        <dbReference type="Rhea" id="RHEA:64224"/>
        <dbReference type="Rhea" id="RHEA-COMP:11727"/>
        <dbReference type="Rhea" id="RHEA-COMP:13381"/>
        <dbReference type="ChEBI" id="CHEBI:13193"/>
        <dbReference type="ChEBI" id="CHEBI:15377"/>
        <dbReference type="ChEBI" id="CHEBI:15379"/>
        <dbReference type="ChEBI" id="CHEBI:17499"/>
        <dbReference type="ChEBI" id="CHEBI:65315"/>
        <dbReference type="ChEBI" id="CHEBI:136877"/>
    </reaction>
</comment>
<comment type="similarity">
    <text evidence="1">Belongs to the TrhO family.</text>
</comment>
<sequence>MKKNNYKIVSLYSFFSFQENSIIELKQNLLRIEKENDLSGLLIIASEGINGTICAEEKIIENILNLIKNIVGNNQLNIKVSYSKEKIFKKLKLKIKNEIVTMGVPEINPLEDAGTYIDSFNWNKLIKDKDTIVIDTRNHYEVSIGSFKKSINPNTKNFSEFPQWVDNNLDNHLGNENSKNIAMFCTGGIRCEKATTLLKNKGYKNIFHLKGGILKYLEDISKEESLFEGECFVFDKRVALDHELKKGSYSICHACGMPISIEDQTKVEYIEGIQCHFCINKFTDEDRKRFEERQKQINKLKVKNQEISNN</sequence>
<reference key="1">
    <citation type="journal article" date="2007" name="PLoS Genet.">
        <title>Patterns and implications of gene gain and loss in the evolution of Prochlorococcus.</title>
        <authorList>
            <person name="Kettler G.C."/>
            <person name="Martiny A.C."/>
            <person name="Huang K."/>
            <person name="Zucker J."/>
            <person name="Coleman M.L."/>
            <person name="Rodrigue S."/>
            <person name="Chen F."/>
            <person name="Lapidus A."/>
            <person name="Ferriera S."/>
            <person name="Johnson J."/>
            <person name="Steglich C."/>
            <person name="Church G.M."/>
            <person name="Richardson P."/>
            <person name="Chisholm S.W."/>
        </authorList>
    </citation>
    <scope>NUCLEOTIDE SEQUENCE [LARGE SCALE GENOMIC DNA]</scope>
    <source>
        <strain>MIT 9515</strain>
    </source>
</reference>
<gene>
    <name evidence="1" type="primary">trhO</name>
    <name type="ordered locus">P9515_11851</name>
</gene>
<feature type="chain" id="PRO_1000013756" description="tRNA uridine(34) hydroxylase">
    <location>
        <begin position="1"/>
        <end position="310"/>
    </location>
</feature>
<feature type="domain" description="Rhodanese" evidence="1">
    <location>
        <begin position="127"/>
        <end position="225"/>
    </location>
</feature>
<feature type="active site" description="Cysteine persulfide intermediate" evidence="1">
    <location>
        <position position="185"/>
    </location>
</feature>
<proteinExistence type="inferred from homology"/>
<organism>
    <name type="scientific">Prochlorococcus marinus (strain MIT 9515)</name>
    <dbReference type="NCBI Taxonomy" id="167542"/>
    <lineage>
        <taxon>Bacteria</taxon>
        <taxon>Bacillati</taxon>
        <taxon>Cyanobacteriota</taxon>
        <taxon>Cyanophyceae</taxon>
        <taxon>Synechococcales</taxon>
        <taxon>Prochlorococcaceae</taxon>
        <taxon>Prochlorococcus</taxon>
    </lineage>
</organism>
<accession>A2BX81</accession>
<evidence type="ECO:0000255" key="1">
    <source>
        <dbReference type="HAMAP-Rule" id="MF_00469"/>
    </source>
</evidence>